<keyword id="KW-0002">3D-structure</keyword>
<keyword id="KW-0012">Acyltransferase</keyword>
<keyword id="KW-0025">Alternative splicing</keyword>
<keyword id="KW-0963">Cytoplasm</keyword>
<keyword id="KW-0221">Differentiation</keyword>
<keyword id="KW-0276">Fatty acid metabolism</keyword>
<keyword id="KW-0444">Lipid biosynthesis</keyword>
<keyword id="KW-0551">Lipid droplet</keyword>
<keyword id="KW-0443">Lipid metabolism</keyword>
<keyword id="KW-0594">Phospholipid biosynthesis</keyword>
<keyword id="KW-1208">Phospholipid metabolism</keyword>
<keyword id="KW-0597">Phosphoprotein</keyword>
<keyword id="KW-1185">Reference proteome</keyword>
<keyword id="KW-0808">Transferase</keyword>
<feature type="chain" id="PRO_0000080867" description="1-acylglycerol-3-phosphate O-acyltransferase ABHD5">
    <location>
        <begin position="1"/>
        <end position="351"/>
    </location>
</feature>
<feature type="domain" description="AB hydrolase-1" evidence="4">
    <location>
        <begin position="79"/>
        <end position="184"/>
    </location>
</feature>
<feature type="short sequence motif" description="HXXXXD motif">
    <location>
        <begin position="329"/>
        <end position="334"/>
    </location>
</feature>
<feature type="modified residue" description="Phosphoserine" evidence="2">
    <location>
        <position position="124"/>
    </location>
</feature>
<feature type="splice variant" id="VSP_015345" description="In isoform 2." evidence="13">
    <location>
        <begin position="19"/>
        <end position="171"/>
    </location>
</feature>
<feature type="helix" evidence="17">
    <location>
        <begin position="21"/>
        <end position="23"/>
    </location>
</feature>
<feature type="strand" evidence="17">
    <location>
        <begin position="39"/>
        <end position="41"/>
    </location>
</feature>
<proteinExistence type="evidence at protein level"/>
<protein>
    <recommendedName>
        <fullName evidence="14">1-acylglycerol-3-phosphate O-acyltransferase ABHD5</fullName>
        <ecNumber evidence="3">2.3.1.51</ecNumber>
    </recommendedName>
    <alternativeName>
        <fullName>Abhydrolase domain-containing protein 5</fullName>
    </alternativeName>
    <alternativeName>
        <fullName>Lipid droplet-binding protein CGI-58</fullName>
        <shortName>Protein CGI-58</shortName>
    </alternativeName>
</protein>
<sequence>MKAMAAEEEVDSADAGGGSGWLTGWLPTWCPTSTSHLKEAEEKMLKCVPCTYKKEPVRISNGNRIWTLMFSHNISSKTPLVLLHGFGGGLGLWALNFEDLSTDRPVYAFDLLGFGRSSRPRFDSDAEEVENQFVESIEEWRCALRLDKMILLGHNLGGFLAAAYSLKYPSRVSHLILVEPWGFPERPDLADQERPIPVWIRALGAALTPFNPLAGLRIAGPFGLSLVQRLRPDFKRKYSSMFEDDTVTEYIYHCNVQTPSGETAFKNMTIPYGWAKRPMLQRIGGLHPDIPVSVIFGARSCIDGNSGTSIQSLRPKSYVKTIAILGAGHYVYADQPEEFNQKVKEICHTVD</sequence>
<organism>
    <name type="scientific">Mus musculus</name>
    <name type="common">Mouse</name>
    <dbReference type="NCBI Taxonomy" id="10090"/>
    <lineage>
        <taxon>Eukaryota</taxon>
        <taxon>Metazoa</taxon>
        <taxon>Chordata</taxon>
        <taxon>Craniata</taxon>
        <taxon>Vertebrata</taxon>
        <taxon>Euteleostomi</taxon>
        <taxon>Mammalia</taxon>
        <taxon>Eutheria</taxon>
        <taxon>Euarchontoglires</taxon>
        <taxon>Glires</taxon>
        <taxon>Rodentia</taxon>
        <taxon>Myomorpha</taxon>
        <taxon>Muroidea</taxon>
        <taxon>Muridae</taxon>
        <taxon>Murinae</taxon>
        <taxon>Mus</taxon>
        <taxon>Mus</taxon>
    </lineage>
</organism>
<comment type="function">
    <text evidence="3 6 10 12">Coenzyme A-dependent lysophosphatidic acid acyltransferase that catalyzes the transfer of an acyl group on a lysophosphatidic acid (PubMed:19801371). Functions preferentially with 1-oleoyl-lysophosphatidic acid followed by 1-palmitoyl-lysophosphatidic acid, 1-stearoyl-lysophosphatidic acid and 1-arachidonoyl-lysophosphatidic acid as lipid acceptor (PubMed:19801371). Functions preferentially with arachidonoyl-CoA followed by oleoyl-CoA as acyl group donors (PubMed:19801371). Functions in phosphatidic acid biosynthesis (By similarity). May regulate the cellular storage of triacylglycerol through activation of the phospholipase PNPLA2 (PubMed:16679289). Involved in keratinocyte differentiation (By similarity). Regulates lipid droplet fusion (PubMed:26083785).</text>
</comment>
<comment type="catalytic activity">
    <reaction evidence="3">
        <text>a 1-acyl-sn-glycero-3-phosphate + an acyl-CoA = a 1,2-diacyl-sn-glycero-3-phosphate + CoA</text>
        <dbReference type="Rhea" id="RHEA:19709"/>
        <dbReference type="ChEBI" id="CHEBI:57287"/>
        <dbReference type="ChEBI" id="CHEBI:57970"/>
        <dbReference type="ChEBI" id="CHEBI:58342"/>
        <dbReference type="ChEBI" id="CHEBI:58608"/>
        <dbReference type="EC" id="2.3.1.51"/>
    </reaction>
    <physiologicalReaction direction="left-to-right" evidence="3">
        <dbReference type="Rhea" id="RHEA:19710"/>
    </physiologicalReaction>
</comment>
<comment type="catalytic activity">
    <reaction evidence="10">
        <text>1-(9Z-octadecenoyl)-sn-glycero-3-phosphate + (9Z)-octadecenoyl-CoA = 1,2-di-(9Z-octadecenoyl)-sn-glycero-3-phosphate + CoA</text>
        <dbReference type="Rhea" id="RHEA:37131"/>
        <dbReference type="ChEBI" id="CHEBI:57287"/>
        <dbReference type="ChEBI" id="CHEBI:57387"/>
        <dbReference type="ChEBI" id="CHEBI:74544"/>
        <dbReference type="ChEBI" id="CHEBI:74546"/>
    </reaction>
    <physiologicalReaction direction="left-to-right" evidence="15">
        <dbReference type="Rhea" id="RHEA:37132"/>
    </physiologicalReaction>
</comment>
<comment type="catalytic activity">
    <reaction evidence="10">
        <text>1-(9Z-octadecenoyl)-sn-glycero-3-phosphate + hexadecanoyl-CoA = 1-(9Z)-octadecenoyl-2-hexadecanoyl-sn-glycero-3-phosphate + CoA</text>
        <dbReference type="Rhea" id="RHEA:37143"/>
        <dbReference type="ChEBI" id="CHEBI:57287"/>
        <dbReference type="ChEBI" id="CHEBI:57379"/>
        <dbReference type="ChEBI" id="CHEBI:74544"/>
        <dbReference type="ChEBI" id="CHEBI:74551"/>
    </reaction>
    <physiologicalReaction direction="left-to-right" evidence="15">
        <dbReference type="Rhea" id="RHEA:37144"/>
    </physiologicalReaction>
</comment>
<comment type="catalytic activity">
    <reaction evidence="10">
        <text>1-(9Z-octadecenoyl)-sn-glycero-3-phosphate + octadecanoyl-CoA = 1-(9Z-octadecenoyl)-2-octadecanoyl-sn-glycero-3-phosphate + CoA</text>
        <dbReference type="Rhea" id="RHEA:37147"/>
        <dbReference type="ChEBI" id="CHEBI:57287"/>
        <dbReference type="ChEBI" id="CHEBI:57394"/>
        <dbReference type="ChEBI" id="CHEBI:74544"/>
        <dbReference type="ChEBI" id="CHEBI:74552"/>
    </reaction>
    <physiologicalReaction direction="left-to-right" evidence="15">
        <dbReference type="Rhea" id="RHEA:37148"/>
    </physiologicalReaction>
</comment>
<comment type="catalytic activity">
    <reaction evidence="10">
        <text>1-(9Z-octadecenoyl)-sn-glycero-3-phosphate + (5Z,8Z,11Z,14Z)-eicosatetraenoyl-CoA = 1-(9Z)-octadecenoyl-2-(5Z,8Z,11Z,14Z)-eicosatetraenoyl-sn-glycero-3-phosphate + CoA</text>
        <dbReference type="Rhea" id="RHEA:37443"/>
        <dbReference type="ChEBI" id="CHEBI:57287"/>
        <dbReference type="ChEBI" id="CHEBI:57368"/>
        <dbReference type="ChEBI" id="CHEBI:74544"/>
        <dbReference type="ChEBI" id="CHEBI:74928"/>
    </reaction>
    <physiologicalReaction direction="left-to-right" evidence="15">
        <dbReference type="Rhea" id="RHEA:37444"/>
    </physiologicalReaction>
</comment>
<comment type="catalytic activity">
    <reaction evidence="10">
        <text>eicosanoyl-CoA + 1-(9Z-octadecenoyl)-sn-glycero-3-phosphate = 1-(9Z)-octadecenoyl-2-eicosanoyl-sn-glycero-3-phosphate + CoA</text>
        <dbReference type="Rhea" id="RHEA:37451"/>
        <dbReference type="ChEBI" id="CHEBI:57287"/>
        <dbReference type="ChEBI" id="CHEBI:57380"/>
        <dbReference type="ChEBI" id="CHEBI:74544"/>
        <dbReference type="ChEBI" id="CHEBI:74937"/>
    </reaction>
    <physiologicalReaction direction="left-to-right" evidence="15">
        <dbReference type="Rhea" id="RHEA:37452"/>
    </physiologicalReaction>
</comment>
<comment type="catalytic activity">
    <reaction evidence="10">
        <text>1-hexadecanoyl-sn-glycero-3-phosphate + (9Z)-octadecenoyl-CoA = 1-hexadecanoyl-2-(9Z-octadecenoyl)-sn-glycero-3-phosphate + CoA</text>
        <dbReference type="Rhea" id="RHEA:33187"/>
        <dbReference type="ChEBI" id="CHEBI:57287"/>
        <dbReference type="ChEBI" id="CHEBI:57387"/>
        <dbReference type="ChEBI" id="CHEBI:57518"/>
        <dbReference type="ChEBI" id="CHEBI:64839"/>
    </reaction>
    <physiologicalReaction direction="left-to-right" evidence="15">
        <dbReference type="Rhea" id="RHEA:33188"/>
    </physiologicalReaction>
</comment>
<comment type="catalytic activity">
    <reaction evidence="10">
        <text>1-octadecanoyl-sn-glycero-3-phosphate + (9Z)-octadecenoyl-CoA = 1-octadecanoyl-2-(9Z-octadecenoyl)-sn-glycero-3-phosphate + CoA</text>
        <dbReference type="Rhea" id="RHEA:37163"/>
        <dbReference type="ChEBI" id="CHEBI:57287"/>
        <dbReference type="ChEBI" id="CHEBI:57387"/>
        <dbReference type="ChEBI" id="CHEBI:74560"/>
        <dbReference type="ChEBI" id="CHEBI:74565"/>
    </reaction>
    <physiologicalReaction direction="left-to-right" evidence="15">
        <dbReference type="Rhea" id="RHEA:37164"/>
    </physiologicalReaction>
</comment>
<comment type="catalytic activity">
    <reaction evidence="10">
        <text>1-(5Z,8Z,11Z,14Z-eicosatetraenoyl)-sn-glycero-3-phosphate + (9Z)-octadecenoyl-CoA = 1-(5Z,8Z,11Z,14Z)-eicosatetraenoyl-2-(9Z)-octadecenoyl-sn-glycero-3-phosphate + CoA</text>
        <dbReference type="Rhea" id="RHEA:37455"/>
        <dbReference type="ChEBI" id="CHEBI:57287"/>
        <dbReference type="ChEBI" id="CHEBI:57387"/>
        <dbReference type="ChEBI" id="CHEBI:74938"/>
        <dbReference type="ChEBI" id="CHEBI:74941"/>
    </reaction>
    <physiologicalReaction direction="left-to-right" evidence="15">
        <dbReference type="Rhea" id="RHEA:37456"/>
    </physiologicalReaction>
</comment>
<comment type="activity regulation">
    <text evidence="10">Acyltransferase activity is inhibited by detergents such as Triton X-100 and 3-[(3-cholamidopropyl)dimethylammonio]-1-propanesulfonate (CHAPS). Acyltransferase activity is inhibited by the presence of magnesium and calcium.</text>
</comment>
<comment type="biophysicochemical properties">
    <kinetics>
        <KM evidence="10">4.8 uM for oleoyl-CoA</KM>
        <KM evidence="10">18 uM for 1-oleoyl-lysophosphatidic acid</KM>
        <Vmax evidence="10">6.1 nmol/min/mg enzyme toward oleoyl-CoA</Vmax>
        <Vmax evidence="10">7.6 nmol/min/mg enzyme toward 1-oleoyl-lysophosphatidic acid</Vmax>
    </kinetics>
    <phDependence>
        <text evidence="10">Optimum pH is 7-8.5.</text>
    </phDependence>
    <temperatureDependence>
        <text evidence="10">Preincubation of the enzyme for 10 minutes at temperatures above 35 degrees Celsius decreases acyltransferase activity subsequently measured at 30 degrees Celsius. Acyltransferase activity is reduced by approximately 60% following 10 minutes preincubation at47 degrees Celsius.</text>
    </temperatureDependence>
</comment>
<comment type="subunit">
    <text evidence="1 5 6 9 11">Interacts with ADRP (By similarity). Interacts with PLIN. Interacts with and PNPLA2. Interacts with PLIN5; promotes interaction with PNPLA2.</text>
</comment>
<comment type="subcellular location">
    <subcellularLocation>
        <location>Cytoplasm</location>
    </subcellularLocation>
    <subcellularLocation>
        <location evidence="7">Lipid droplet</location>
    </subcellularLocation>
    <subcellularLocation>
        <location evidence="7">Cytoplasm</location>
        <location evidence="7">Cytosol</location>
    </subcellularLocation>
    <text>Colocalized with PLIN and ADRP on the surface of lipid droplets. The localization is dependent upon the metabolic status of the adipocytes and the activity of PKA.</text>
</comment>
<comment type="alternative products">
    <event type="alternative splicing"/>
    <isoform>
        <id>Q9DBL9-1</id>
        <name>1</name>
        <sequence type="displayed"/>
    </isoform>
    <isoform>
        <id>Q9DBL9-2</id>
        <name>2</name>
        <sequence type="described" ref="VSP_015345"/>
    </isoform>
</comment>
<comment type="tissue specificity">
    <text evidence="5 6 8">Highly expressed in the adipose tissue and testes. Weakly expressed in the liver, muscle, kidney, and heart. Expressed by upper epidermal layers and dermal fibroblasts in skin, hepatocytes and hypothalamus in brain (at protein level).</text>
</comment>
<comment type="domain">
    <text evidence="1">The HXXXXD motif is essential for acyltransferase activity and may constitute the binding site for the phosphate moiety of the glycerol-3-phosphate.</text>
</comment>
<comment type="similarity">
    <text evidence="14">Belongs to the peptidase S33 family. ABHD4/ABHD5 subfamily.</text>
</comment>
<gene>
    <name evidence="16" type="primary">Abhd5</name>
</gene>
<dbReference type="EC" id="2.3.1.51" evidence="3"/>
<dbReference type="EMBL" id="AK004873">
    <property type="protein sequence ID" value="BAB23632.1"/>
    <property type="molecule type" value="mRNA"/>
</dbReference>
<dbReference type="EMBL" id="AK019488">
    <property type="protein sequence ID" value="BAB31755.2"/>
    <property type="molecule type" value="mRNA"/>
</dbReference>
<dbReference type="EMBL" id="AK050377">
    <property type="protein sequence ID" value="BAC34220.1"/>
    <property type="molecule type" value="mRNA"/>
</dbReference>
<dbReference type="EMBL" id="BC037063">
    <property type="protein sequence ID" value="AAH37063.1"/>
    <property type="molecule type" value="mRNA"/>
</dbReference>
<dbReference type="CCDS" id="CCDS23646.1">
    <molecule id="Q9DBL9-1"/>
</dbReference>
<dbReference type="CCDS" id="CCDS90688.1">
    <molecule id="Q9DBL9-2"/>
</dbReference>
<dbReference type="RefSeq" id="NP_001346136.1">
    <molecule id="Q9DBL9-2"/>
    <property type="nucleotide sequence ID" value="NM_001359207.1"/>
</dbReference>
<dbReference type="RefSeq" id="NP_080455.1">
    <molecule id="Q9DBL9-1"/>
    <property type="nucleotide sequence ID" value="NM_026179.2"/>
</dbReference>
<dbReference type="RefSeq" id="XP_006512308.1">
    <property type="nucleotide sequence ID" value="XM_006512245.3"/>
</dbReference>
<dbReference type="PDB" id="5A4H">
    <property type="method" value="NMR"/>
    <property type="chains" value="A=10-43"/>
</dbReference>
<dbReference type="PDBsum" id="5A4H"/>
<dbReference type="SMR" id="Q9DBL9"/>
<dbReference type="BioGRID" id="212211">
    <property type="interactions" value="5"/>
</dbReference>
<dbReference type="DIP" id="DIP-61642N"/>
<dbReference type="FunCoup" id="Q9DBL9">
    <property type="interactions" value="2519"/>
</dbReference>
<dbReference type="IntAct" id="Q9DBL9">
    <property type="interactions" value="1"/>
</dbReference>
<dbReference type="STRING" id="10090.ENSMUSP00000122274"/>
<dbReference type="ChEMBL" id="CHEMBL3259509"/>
<dbReference type="SwissLipids" id="SLP:000000283"/>
<dbReference type="ESTHER" id="mouse-abhd5">
    <property type="family name" value="CGI-58_ABHD5_ABHD4"/>
</dbReference>
<dbReference type="MEROPS" id="S33.975"/>
<dbReference type="GlyGen" id="Q9DBL9">
    <property type="glycosylation" value="1 site, 1 O-linked glycan (1 site)"/>
</dbReference>
<dbReference type="iPTMnet" id="Q9DBL9"/>
<dbReference type="PhosphoSitePlus" id="Q9DBL9"/>
<dbReference type="SwissPalm" id="Q9DBL9"/>
<dbReference type="jPOST" id="Q9DBL9"/>
<dbReference type="PaxDb" id="10090-ENSMUSP00000122274"/>
<dbReference type="PeptideAtlas" id="Q9DBL9"/>
<dbReference type="ProteomicsDB" id="286052">
    <molecule id="Q9DBL9-1"/>
</dbReference>
<dbReference type="ProteomicsDB" id="286053">
    <molecule id="Q9DBL9-2"/>
</dbReference>
<dbReference type="Pumba" id="Q9DBL9"/>
<dbReference type="Antibodypedia" id="29395">
    <property type="antibodies" value="338 antibodies from 32 providers"/>
</dbReference>
<dbReference type="DNASU" id="67469"/>
<dbReference type="Ensembl" id="ENSMUST00000111497.5">
    <molecule id="Q9DBL9-2"/>
    <property type="protein sequence ID" value="ENSMUSP00000107123.4"/>
    <property type="gene ID" value="ENSMUSG00000032540.17"/>
</dbReference>
<dbReference type="Ensembl" id="ENSMUST00000156520.8">
    <molecule id="Q9DBL9-1"/>
    <property type="protein sequence ID" value="ENSMUSP00000122274.2"/>
    <property type="gene ID" value="ENSMUSG00000032540.17"/>
</dbReference>
<dbReference type="GeneID" id="67469"/>
<dbReference type="KEGG" id="mmu:67469"/>
<dbReference type="UCSC" id="uc009sew.1">
    <molecule id="Q9DBL9-1"/>
    <property type="organism name" value="mouse"/>
</dbReference>
<dbReference type="UCSC" id="uc009sey.1">
    <molecule id="Q9DBL9-2"/>
    <property type="organism name" value="mouse"/>
</dbReference>
<dbReference type="AGR" id="MGI:1914719"/>
<dbReference type="CTD" id="51099"/>
<dbReference type="MGI" id="MGI:1914719">
    <property type="gene designation" value="Abhd5"/>
</dbReference>
<dbReference type="VEuPathDB" id="HostDB:ENSMUSG00000032540"/>
<dbReference type="eggNOG" id="KOG4409">
    <property type="taxonomic scope" value="Eukaryota"/>
</dbReference>
<dbReference type="GeneTree" id="ENSGT00390000016277"/>
<dbReference type="HOGENOM" id="CLU_017361_0_0_1"/>
<dbReference type="InParanoid" id="Q9DBL9"/>
<dbReference type="OMA" id="ARDPIMD"/>
<dbReference type="OrthoDB" id="7457040at2759"/>
<dbReference type="PhylomeDB" id="Q9DBL9"/>
<dbReference type="TreeFam" id="TF314196"/>
<dbReference type="BRENDA" id="2.3.1.51">
    <property type="organism ID" value="3474"/>
</dbReference>
<dbReference type="BioGRID-ORCS" id="67469">
    <property type="hits" value="1 hit in 79 CRISPR screens"/>
</dbReference>
<dbReference type="ChiTaRS" id="Abhd5">
    <property type="organism name" value="mouse"/>
</dbReference>
<dbReference type="PRO" id="PR:Q9DBL9"/>
<dbReference type="Proteomes" id="UP000000589">
    <property type="component" value="Chromosome 9"/>
</dbReference>
<dbReference type="RNAct" id="Q9DBL9">
    <property type="molecule type" value="protein"/>
</dbReference>
<dbReference type="Bgee" id="ENSMUSG00000032540">
    <property type="expression patterns" value="Expressed in spermatid and 261 other cell types or tissues"/>
</dbReference>
<dbReference type="ExpressionAtlas" id="Q9DBL9">
    <property type="expression patterns" value="baseline and differential"/>
</dbReference>
<dbReference type="GO" id="GO:0005829">
    <property type="term" value="C:cytosol"/>
    <property type="evidence" value="ECO:0000314"/>
    <property type="project" value="UniProtKB"/>
</dbReference>
<dbReference type="GO" id="GO:0005811">
    <property type="term" value="C:lipid droplet"/>
    <property type="evidence" value="ECO:0000314"/>
    <property type="project" value="UniProtKB"/>
</dbReference>
<dbReference type="GO" id="GO:0005654">
    <property type="term" value="C:nucleoplasm"/>
    <property type="evidence" value="ECO:0007669"/>
    <property type="project" value="Ensembl"/>
</dbReference>
<dbReference type="GO" id="GO:0003841">
    <property type="term" value="F:1-acylglycerol-3-phosphate O-acyltransferase activity"/>
    <property type="evidence" value="ECO:0000250"/>
    <property type="project" value="UniProtKB"/>
</dbReference>
<dbReference type="GO" id="GO:0060229">
    <property type="term" value="F:lipase activator activity"/>
    <property type="evidence" value="ECO:0000314"/>
    <property type="project" value="MGI"/>
</dbReference>
<dbReference type="GO" id="GO:0030154">
    <property type="term" value="P:cell differentiation"/>
    <property type="evidence" value="ECO:0007669"/>
    <property type="project" value="UniProtKB-KW"/>
</dbReference>
<dbReference type="GO" id="GO:0006631">
    <property type="term" value="P:fatty acid metabolic process"/>
    <property type="evidence" value="ECO:0007669"/>
    <property type="project" value="UniProtKB-KW"/>
</dbReference>
<dbReference type="GO" id="GO:0006629">
    <property type="term" value="P:lipid metabolic process"/>
    <property type="evidence" value="ECO:0000266"/>
    <property type="project" value="MGI"/>
</dbReference>
<dbReference type="GO" id="GO:0010891">
    <property type="term" value="P:negative regulation of triglyceride storage"/>
    <property type="evidence" value="ECO:0000314"/>
    <property type="project" value="UniProtKB"/>
</dbReference>
<dbReference type="GO" id="GO:0006654">
    <property type="term" value="P:phosphatidic acid biosynthetic process"/>
    <property type="evidence" value="ECO:0000250"/>
    <property type="project" value="UniProtKB"/>
</dbReference>
<dbReference type="GO" id="GO:0050996">
    <property type="term" value="P:positive regulation of lipid catabolic process"/>
    <property type="evidence" value="ECO:0000315"/>
    <property type="project" value="CACAO"/>
</dbReference>
<dbReference type="GO" id="GO:0010898">
    <property type="term" value="P:positive regulation of triglyceride catabolic process"/>
    <property type="evidence" value="ECO:0000314"/>
    <property type="project" value="UniProtKB"/>
</dbReference>
<dbReference type="FunFam" id="3.40.50.1820:FF:000019">
    <property type="entry name" value="1-acylglycerol-3-phosphate O-acyltransferase ABHD5"/>
    <property type="match status" value="1"/>
</dbReference>
<dbReference type="Gene3D" id="3.40.50.1820">
    <property type="entry name" value="alpha/beta hydrolase"/>
    <property type="match status" value="1"/>
</dbReference>
<dbReference type="InterPro" id="IPR000073">
    <property type="entry name" value="AB_hydrolase_1"/>
</dbReference>
<dbReference type="InterPro" id="IPR029058">
    <property type="entry name" value="AB_hydrolase_fold"/>
</dbReference>
<dbReference type="PANTHER" id="PTHR42886:SF34">
    <property type="entry name" value="1-ACYLGLYCEROL-3-PHOSPHATE O-ACYLTRANSFERASE ABHD5"/>
    <property type="match status" value="1"/>
</dbReference>
<dbReference type="PANTHER" id="PTHR42886">
    <property type="entry name" value="RE40534P-RELATED"/>
    <property type="match status" value="1"/>
</dbReference>
<dbReference type="Pfam" id="PF00561">
    <property type="entry name" value="Abhydrolase_1"/>
    <property type="match status" value="1"/>
</dbReference>
<dbReference type="PRINTS" id="PR00111">
    <property type="entry name" value="ABHYDROLASE"/>
</dbReference>
<dbReference type="SUPFAM" id="SSF53474">
    <property type="entry name" value="alpha/beta-Hydrolases"/>
    <property type="match status" value="1"/>
</dbReference>
<evidence type="ECO:0000250" key="1"/>
<evidence type="ECO:0000250" key="2">
    <source>
        <dbReference type="UniProtKB" id="Q6QA69"/>
    </source>
</evidence>
<evidence type="ECO:0000250" key="3">
    <source>
        <dbReference type="UniProtKB" id="Q8WTS1"/>
    </source>
</evidence>
<evidence type="ECO:0000255" key="4"/>
<evidence type="ECO:0000269" key="5">
    <source>
    </source>
</evidence>
<evidence type="ECO:0000269" key="6">
    <source>
    </source>
</evidence>
<evidence type="ECO:0000269" key="7">
    <source>
    </source>
</evidence>
<evidence type="ECO:0000269" key="8">
    <source>
    </source>
</evidence>
<evidence type="ECO:0000269" key="9">
    <source>
    </source>
</evidence>
<evidence type="ECO:0000269" key="10">
    <source>
    </source>
</evidence>
<evidence type="ECO:0000269" key="11">
    <source>
    </source>
</evidence>
<evidence type="ECO:0000269" key="12">
    <source>
    </source>
</evidence>
<evidence type="ECO:0000303" key="13">
    <source>
    </source>
</evidence>
<evidence type="ECO:0000305" key="14"/>
<evidence type="ECO:0000305" key="15">
    <source>
    </source>
</evidence>
<evidence type="ECO:0000312" key="16">
    <source>
        <dbReference type="MGI" id="MGI:1914719"/>
    </source>
</evidence>
<evidence type="ECO:0007829" key="17">
    <source>
        <dbReference type="PDB" id="5A4H"/>
    </source>
</evidence>
<reference key="1">
    <citation type="journal article" date="2005" name="Science">
        <title>The transcriptional landscape of the mammalian genome.</title>
        <authorList>
            <person name="Carninci P."/>
            <person name="Kasukawa T."/>
            <person name="Katayama S."/>
            <person name="Gough J."/>
            <person name="Frith M.C."/>
            <person name="Maeda N."/>
            <person name="Oyama R."/>
            <person name="Ravasi T."/>
            <person name="Lenhard B."/>
            <person name="Wells C."/>
            <person name="Kodzius R."/>
            <person name="Shimokawa K."/>
            <person name="Bajic V.B."/>
            <person name="Brenner S.E."/>
            <person name="Batalov S."/>
            <person name="Forrest A.R."/>
            <person name="Zavolan M."/>
            <person name="Davis M.J."/>
            <person name="Wilming L.G."/>
            <person name="Aidinis V."/>
            <person name="Allen J.E."/>
            <person name="Ambesi-Impiombato A."/>
            <person name="Apweiler R."/>
            <person name="Aturaliya R.N."/>
            <person name="Bailey T.L."/>
            <person name="Bansal M."/>
            <person name="Baxter L."/>
            <person name="Beisel K.W."/>
            <person name="Bersano T."/>
            <person name="Bono H."/>
            <person name="Chalk A.M."/>
            <person name="Chiu K.P."/>
            <person name="Choudhary V."/>
            <person name="Christoffels A."/>
            <person name="Clutterbuck D.R."/>
            <person name="Crowe M.L."/>
            <person name="Dalla E."/>
            <person name="Dalrymple B.P."/>
            <person name="de Bono B."/>
            <person name="Della Gatta G."/>
            <person name="di Bernardo D."/>
            <person name="Down T."/>
            <person name="Engstrom P."/>
            <person name="Fagiolini M."/>
            <person name="Faulkner G."/>
            <person name="Fletcher C.F."/>
            <person name="Fukushima T."/>
            <person name="Furuno M."/>
            <person name="Futaki S."/>
            <person name="Gariboldi M."/>
            <person name="Georgii-Hemming P."/>
            <person name="Gingeras T.R."/>
            <person name="Gojobori T."/>
            <person name="Green R.E."/>
            <person name="Gustincich S."/>
            <person name="Harbers M."/>
            <person name="Hayashi Y."/>
            <person name="Hensch T.K."/>
            <person name="Hirokawa N."/>
            <person name="Hill D."/>
            <person name="Huminiecki L."/>
            <person name="Iacono M."/>
            <person name="Ikeo K."/>
            <person name="Iwama A."/>
            <person name="Ishikawa T."/>
            <person name="Jakt M."/>
            <person name="Kanapin A."/>
            <person name="Katoh M."/>
            <person name="Kawasawa Y."/>
            <person name="Kelso J."/>
            <person name="Kitamura H."/>
            <person name="Kitano H."/>
            <person name="Kollias G."/>
            <person name="Krishnan S.P."/>
            <person name="Kruger A."/>
            <person name="Kummerfeld S.K."/>
            <person name="Kurochkin I.V."/>
            <person name="Lareau L.F."/>
            <person name="Lazarevic D."/>
            <person name="Lipovich L."/>
            <person name="Liu J."/>
            <person name="Liuni S."/>
            <person name="McWilliam S."/>
            <person name="Madan Babu M."/>
            <person name="Madera M."/>
            <person name="Marchionni L."/>
            <person name="Matsuda H."/>
            <person name="Matsuzawa S."/>
            <person name="Miki H."/>
            <person name="Mignone F."/>
            <person name="Miyake S."/>
            <person name="Morris K."/>
            <person name="Mottagui-Tabar S."/>
            <person name="Mulder N."/>
            <person name="Nakano N."/>
            <person name="Nakauchi H."/>
            <person name="Ng P."/>
            <person name="Nilsson R."/>
            <person name="Nishiguchi S."/>
            <person name="Nishikawa S."/>
            <person name="Nori F."/>
            <person name="Ohara O."/>
            <person name="Okazaki Y."/>
            <person name="Orlando V."/>
            <person name="Pang K.C."/>
            <person name="Pavan W.J."/>
            <person name="Pavesi G."/>
            <person name="Pesole G."/>
            <person name="Petrovsky N."/>
            <person name="Piazza S."/>
            <person name="Reed J."/>
            <person name="Reid J.F."/>
            <person name="Ring B.Z."/>
            <person name="Ringwald M."/>
            <person name="Rost B."/>
            <person name="Ruan Y."/>
            <person name="Salzberg S.L."/>
            <person name="Sandelin A."/>
            <person name="Schneider C."/>
            <person name="Schoenbach C."/>
            <person name="Sekiguchi K."/>
            <person name="Semple C.A."/>
            <person name="Seno S."/>
            <person name="Sessa L."/>
            <person name="Sheng Y."/>
            <person name="Shibata Y."/>
            <person name="Shimada H."/>
            <person name="Shimada K."/>
            <person name="Silva D."/>
            <person name="Sinclair B."/>
            <person name="Sperling S."/>
            <person name="Stupka E."/>
            <person name="Sugiura K."/>
            <person name="Sultana R."/>
            <person name="Takenaka Y."/>
            <person name="Taki K."/>
            <person name="Tammoja K."/>
            <person name="Tan S.L."/>
            <person name="Tang S."/>
            <person name="Taylor M.S."/>
            <person name="Tegner J."/>
            <person name="Teichmann S.A."/>
            <person name="Ueda H.R."/>
            <person name="van Nimwegen E."/>
            <person name="Verardo R."/>
            <person name="Wei C.L."/>
            <person name="Yagi K."/>
            <person name="Yamanishi H."/>
            <person name="Zabarovsky E."/>
            <person name="Zhu S."/>
            <person name="Zimmer A."/>
            <person name="Hide W."/>
            <person name="Bult C."/>
            <person name="Grimmond S.M."/>
            <person name="Teasdale R.D."/>
            <person name="Liu E.T."/>
            <person name="Brusic V."/>
            <person name="Quackenbush J."/>
            <person name="Wahlestedt C."/>
            <person name="Mattick J.S."/>
            <person name="Hume D.A."/>
            <person name="Kai C."/>
            <person name="Sasaki D."/>
            <person name="Tomaru Y."/>
            <person name="Fukuda S."/>
            <person name="Kanamori-Katayama M."/>
            <person name="Suzuki M."/>
            <person name="Aoki J."/>
            <person name="Arakawa T."/>
            <person name="Iida J."/>
            <person name="Imamura K."/>
            <person name="Itoh M."/>
            <person name="Kato T."/>
            <person name="Kawaji H."/>
            <person name="Kawagashira N."/>
            <person name="Kawashima T."/>
            <person name="Kojima M."/>
            <person name="Kondo S."/>
            <person name="Konno H."/>
            <person name="Nakano K."/>
            <person name="Ninomiya N."/>
            <person name="Nishio T."/>
            <person name="Okada M."/>
            <person name="Plessy C."/>
            <person name="Shibata K."/>
            <person name="Shiraki T."/>
            <person name="Suzuki S."/>
            <person name="Tagami M."/>
            <person name="Waki K."/>
            <person name="Watahiki A."/>
            <person name="Okamura-Oho Y."/>
            <person name="Suzuki H."/>
            <person name="Kawai J."/>
            <person name="Hayashizaki Y."/>
        </authorList>
    </citation>
    <scope>NUCLEOTIDE SEQUENCE [LARGE SCALE MRNA] (ISOFORMS 1 AND 2)</scope>
    <source>
        <strain>C57BL/6J</strain>
        <tissue>Liver</tissue>
    </source>
</reference>
<reference key="2">
    <citation type="journal article" date="2004" name="Genome Res.">
        <title>The status, quality, and expansion of the NIH full-length cDNA project: the Mammalian Gene Collection (MGC).</title>
        <authorList>
            <consortium name="The MGC Project Team"/>
        </authorList>
    </citation>
    <scope>NUCLEOTIDE SEQUENCE [LARGE SCALE MRNA] (ISOFORM 1)</scope>
    <source>
        <strain>FVB/N</strain>
        <tissue>Colon</tissue>
        <tissue>Mammary gland</tissue>
    </source>
</reference>
<reference key="3">
    <citation type="journal article" date="2004" name="J. Biol. Chem.">
        <title>Perilipin A mediates the reversible binding of CGI-58 to lipid droplets in 3T3-L1 adipocytes.</title>
        <authorList>
            <person name="Subramanian V."/>
            <person name="Rothenberg A."/>
            <person name="Gomez C."/>
            <person name="Cohen A.W."/>
            <person name="Garcia A."/>
            <person name="Bhattacharyya S."/>
            <person name="Shapiro L."/>
            <person name="Dolios G."/>
            <person name="Wang R."/>
            <person name="Lisanti M.P."/>
            <person name="Brasaemle D.L."/>
        </authorList>
    </citation>
    <scope>INTERACTION WITH PLIN</scope>
    <scope>SUBCELLULAR LOCATION</scope>
    <scope>TISSUE SPECIFICITY</scope>
</reference>
<reference key="4">
    <citation type="journal article" date="2006" name="Cell Metab.">
        <title>Adipose triglyceride lipase-mediated lipolysis of cellular fat stores is activated by CGI-58 and defective in Chanarin-Dorfman Syndrome.</title>
        <authorList>
            <person name="Lass A."/>
            <person name="Zimmermann R."/>
            <person name="Haemmerle G."/>
            <person name="Riederer M."/>
            <person name="Schoiswohl G."/>
            <person name="Schweiger M."/>
            <person name="Kienesberger P."/>
            <person name="Strauss J.G."/>
            <person name="Gorkiewicz G."/>
            <person name="Zechner R."/>
        </authorList>
    </citation>
    <scope>FUNCTION</scope>
    <scope>TISSUE SPECIFICITY</scope>
    <scope>INTERACTION WITH PLIN AND PNPLA2</scope>
</reference>
<reference key="5">
    <citation type="journal article" date="2008" name="Am. J. Pathol.">
        <title>CGI-58 is an alpha/beta-hydrolase within lipid transporting lamellar granules of differentiated keratinocytes.</title>
        <authorList>
            <person name="Akiyama M."/>
            <person name="Sakai K."/>
            <person name="Takayama C."/>
            <person name="Yanagi T."/>
            <person name="Yamanaka Y."/>
            <person name="McMillan J.R."/>
            <person name="Shimizu H."/>
        </authorList>
    </citation>
    <scope>SUBCELLULAR LOCATION</scope>
    <scope>TISSUE SPECIFICITY</scope>
</reference>
<reference key="6">
    <citation type="journal article" date="2008" name="J. Biol. Chem.">
        <title>CGI-58, the causative gene for Chanarin-Dorfman syndrome, mediates acylation of lysophosphatidic acid.</title>
        <authorList>
            <person name="Ghosh A.K."/>
            <person name="Ramakrishnan G."/>
            <person name="Chandramohan C."/>
            <person name="Rajasekharan R."/>
        </authorList>
    </citation>
    <scope>IDENTIFICATION BY MASS SPECTROMETRY</scope>
    <scope>SUBCELLULAR LOCATION</scope>
</reference>
<reference key="7">
    <citation type="journal article" date="2009" name="J. Biol. Chem.">
        <title>Functional interactions between Mldp (LSDP5) and Abhd5 in the control of intracellular lipid accumulation.</title>
        <authorList>
            <person name="Granneman J.G."/>
            <person name="Moore H.P."/>
            <person name="Mottillo E.P."/>
            <person name="Zhu Z."/>
        </authorList>
    </citation>
    <scope>INTERACTION WITH PLIN5</scope>
</reference>
<reference key="8">
    <citation type="journal article" date="2010" name="Cell">
        <title>A tissue-specific atlas of mouse protein phosphorylation and expression.</title>
        <authorList>
            <person name="Huttlin E.L."/>
            <person name="Jedrychowski M.P."/>
            <person name="Elias J.E."/>
            <person name="Goswami T."/>
            <person name="Rad R."/>
            <person name="Beausoleil S.A."/>
            <person name="Villen J."/>
            <person name="Haas W."/>
            <person name="Sowa M.E."/>
            <person name="Gygi S.P."/>
        </authorList>
    </citation>
    <scope>IDENTIFICATION BY MASS SPECTROMETRY [LARGE SCALE ANALYSIS]</scope>
    <source>
        <tissue>Brain</tissue>
        <tissue>Brown adipose tissue</tissue>
        <tissue>Heart</tissue>
        <tissue>Kidney</tissue>
        <tissue>Liver</tissue>
        <tissue>Pancreas</tissue>
        <tissue>Spleen</tissue>
        <tissue>Testis</tissue>
    </source>
</reference>
<reference key="9">
    <citation type="journal article" date="2010" name="J. Lipid Res.">
        <title>CGI-58/ABHD5 is a coenzyme A-dependent lysophosphatidic acid acyltransferase.</title>
        <authorList>
            <person name="Montero-Moran G."/>
            <person name="Caviglia J.M."/>
            <person name="McMahon D."/>
            <person name="Rothenberg A."/>
            <person name="Subramanian V."/>
            <person name="Xu Z."/>
            <person name="Lara-Gonzalez S."/>
            <person name="Storch J."/>
            <person name="Carman G.M."/>
            <person name="Brasaemle D.L."/>
        </authorList>
    </citation>
    <scope>CATALYTIC ACTIVITY</scope>
    <scope>BIOPHYSICOCHEMICAL PROPERTIES</scope>
    <scope>ACTIVITY REGULATION</scope>
    <scope>FUNCTION</scope>
    <scope>SUBSTRATE SPECIFICITY</scope>
</reference>
<reference key="10">
    <citation type="journal article" date="2011" name="J. Biol. Chem.">
        <title>Interactions of perilipin-5 (Plin5) with adipose triglyceride lipase.</title>
        <authorList>
            <person name="Granneman J.G."/>
            <person name="Moore H.P."/>
            <person name="Mottillo E.P."/>
            <person name="Zhu Z."/>
            <person name="Zhou L."/>
        </authorList>
    </citation>
    <scope>INTERACTION WITH PLIN5</scope>
</reference>
<reference key="11">
    <citation type="journal article" date="2015" name="PLoS Genet.">
        <title>The causative gene in Chanarian Dorfman syndrome regulates lipid droplet homeostasis in C. elegans.</title>
        <authorList>
            <person name="Xie M."/>
            <person name="Roy R."/>
        </authorList>
    </citation>
    <scope>FUNCTION</scope>
</reference>
<reference key="12">
    <citation type="journal article" date="2016" name="PLoS Genet.">
        <authorList>
            <person name="Xie M."/>
            <person name="Roy R."/>
        </authorList>
    </citation>
    <scope>ERRATUM OF PUBMED:26083785</scope>
</reference>
<name>ABHD5_MOUSE</name>
<accession>Q9DBL9</accession>
<accession>Q9CTY3</accession>